<keyword id="KW-0021">Allosteric enzyme</keyword>
<keyword id="KW-0963">Cytoplasm</keyword>
<keyword id="KW-0378">Hydrolase</keyword>
<keyword id="KW-0479">Metal-binding</keyword>
<keyword id="KW-0645">Protease</keyword>
<keyword id="KW-1185">Reference proteome</keyword>
<keyword id="KW-0915">Sodium</keyword>
<keyword id="KW-0888">Threonine protease</keyword>
<protein>
    <recommendedName>
        <fullName evidence="1">ATP-dependent protease subunit HslV</fullName>
        <ecNumber evidence="1">3.4.25.2</ecNumber>
    </recommendedName>
</protein>
<reference key="1">
    <citation type="journal article" date="2003" name="Proc. Natl. Acad. Sci. U.S.A.">
        <title>The complete genome sequence of Chromobacterium violaceum reveals remarkable and exploitable bacterial adaptability.</title>
        <authorList>
            <person name="Vasconcelos A.T.R."/>
            <person name="de Almeida D.F."/>
            <person name="Hungria M."/>
            <person name="Guimaraes C.T."/>
            <person name="Antonio R.V."/>
            <person name="Almeida F.C."/>
            <person name="de Almeida L.G.P."/>
            <person name="de Almeida R."/>
            <person name="Alves-Gomes J.A."/>
            <person name="Andrade E.M."/>
            <person name="Araripe J."/>
            <person name="de Araujo M.F.F."/>
            <person name="Astolfi-Filho S."/>
            <person name="Azevedo V."/>
            <person name="Baptista A.J."/>
            <person name="Bataus L.A.M."/>
            <person name="Batista J.S."/>
            <person name="Belo A."/>
            <person name="van den Berg C."/>
            <person name="Bogo M."/>
            <person name="Bonatto S."/>
            <person name="Bordignon J."/>
            <person name="Brigido M.M."/>
            <person name="Brito C.A."/>
            <person name="Brocchi M."/>
            <person name="Burity H.A."/>
            <person name="Camargo A.A."/>
            <person name="Cardoso D.D.P."/>
            <person name="Carneiro N.P."/>
            <person name="Carraro D.M."/>
            <person name="Carvalho C.M.B."/>
            <person name="Cascardo J.C.M."/>
            <person name="Cavada B.S."/>
            <person name="Chueire L.M.O."/>
            <person name="Creczynski-Pasa T.B."/>
            <person name="Cunha-Junior N.C."/>
            <person name="Fagundes N."/>
            <person name="Falcao C.L."/>
            <person name="Fantinatti F."/>
            <person name="Farias I.P."/>
            <person name="Felipe M.S.S."/>
            <person name="Ferrari L.P."/>
            <person name="Ferro J.A."/>
            <person name="Ferro M.I.T."/>
            <person name="Franco G.R."/>
            <person name="Freitas N.S.A."/>
            <person name="Furlan L.R."/>
            <person name="Gazzinelli R.T."/>
            <person name="Gomes E.A."/>
            <person name="Goncalves P.R."/>
            <person name="Grangeiro T.B."/>
            <person name="Grattapaglia D."/>
            <person name="Grisard E.C."/>
            <person name="Hanna E.S."/>
            <person name="Jardim S.N."/>
            <person name="Laurino J."/>
            <person name="Leoi L.C.T."/>
            <person name="Lima L.F.A."/>
            <person name="Loureiro M.F."/>
            <person name="Lyra M.C.C.P."/>
            <person name="Madeira H.M.F."/>
            <person name="Manfio G.P."/>
            <person name="Maranhao A.Q."/>
            <person name="Martins W.S."/>
            <person name="di Mauro S.M.Z."/>
            <person name="de Medeiros S.R.B."/>
            <person name="Meissner R.V."/>
            <person name="Moreira M.A.M."/>
            <person name="Nascimento F.F."/>
            <person name="Nicolas M.F."/>
            <person name="Oliveira J.G."/>
            <person name="Oliveira S.C."/>
            <person name="Paixao R.F.C."/>
            <person name="Parente J.A."/>
            <person name="Pedrosa F.O."/>
            <person name="Pena S.D.J."/>
            <person name="Pereira J.O."/>
            <person name="Pereira M."/>
            <person name="Pinto L.S.R.C."/>
            <person name="Pinto L.S."/>
            <person name="Porto J.I.R."/>
            <person name="Potrich D.P."/>
            <person name="Ramalho-Neto C.E."/>
            <person name="Reis A.M.M."/>
            <person name="Rigo L.U."/>
            <person name="Rondinelli E."/>
            <person name="Santos E.B.P."/>
            <person name="Santos F.R."/>
            <person name="Schneider M.P.C."/>
            <person name="Seuanez H.N."/>
            <person name="Silva A.M.R."/>
            <person name="da Silva A.L.C."/>
            <person name="Silva D.W."/>
            <person name="Silva R."/>
            <person name="Simoes I.C."/>
            <person name="Simon D."/>
            <person name="Soares C.M.A."/>
            <person name="Soares R.B.A."/>
            <person name="Souza E.M."/>
            <person name="Souza K.R.L."/>
            <person name="Souza R.C."/>
            <person name="Steffens M.B.R."/>
            <person name="Steindel M."/>
            <person name="Teixeira S.R."/>
            <person name="Urmenyi T."/>
            <person name="Vettore A."/>
            <person name="Wassem R."/>
            <person name="Zaha A."/>
            <person name="Simpson A.J.G."/>
        </authorList>
    </citation>
    <scope>NUCLEOTIDE SEQUENCE [LARGE SCALE GENOMIC DNA]</scope>
    <source>
        <strain>ATCC 12472 / DSM 30191 / JCM 1249 / CCUG 213 / NBRC 12614 / NCIMB 9131 / NCTC 9757 / MK</strain>
    </source>
</reference>
<evidence type="ECO:0000255" key="1">
    <source>
        <dbReference type="HAMAP-Rule" id="MF_00248"/>
    </source>
</evidence>
<name>HSLV_CHRVO</name>
<dbReference type="EC" id="3.4.25.2" evidence="1"/>
<dbReference type="EMBL" id="AE016825">
    <property type="protein sequence ID" value="AAQ58079.1"/>
    <property type="molecule type" value="Genomic_DNA"/>
</dbReference>
<dbReference type="RefSeq" id="WP_011133956.1">
    <property type="nucleotide sequence ID" value="NC_005085.1"/>
</dbReference>
<dbReference type="SMR" id="Q7P113"/>
<dbReference type="STRING" id="243365.CV_0401"/>
<dbReference type="MEROPS" id="T01.006"/>
<dbReference type="GeneID" id="89683864"/>
<dbReference type="KEGG" id="cvi:CV_0401"/>
<dbReference type="eggNOG" id="COG5405">
    <property type="taxonomic scope" value="Bacteria"/>
</dbReference>
<dbReference type="HOGENOM" id="CLU_093872_1_0_4"/>
<dbReference type="OrthoDB" id="9804884at2"/>
<dbReference type="Proteomes" id="UP000001424">
    <property type="component" value="Chromosome"/>
</dbReference>
<dbReference type="GO" id="GO:0009376">
    <property type="term" value="C:HslUV protease complex"/>
    <property type="evidence" value="ECO:0007669"/>
    <property type="project" value="UniProtKB-UniRule"/>
</dbReference>
<dbReference type="GO" id="GO:0005839">
    <property type="term" value="C:proteasome core complex"/>
    <property type="evidence" value="ECO:0007669"/>
    <property type="project" value="InterPro"/>
</dbReference>
<dbReference type="GO" id="GO:0046872">
    <property type="term" value="F:metal ion binding"/>
    <property type="evidence" value="ECO:0007669"/>
    <property type="project" value="UniProtKB-KW"/>
</dbReference>
<dbReference type="GO" id="GO:0004298">
    <property type="term" value="F:threonine-type endopeptidase activity"/>
    <property type="evidence" value="ECO:0007669"/>
    <property type="project" value="UniProtKB-KW"/>
</dbReference>
<dbReference type="GO" id="GO:0051603">
    <property type="term" value="P:proteolysis involved in protein catabolic process"/>
    <property type="evidence" value="ECO:0007669"/>
    <property type="project" value="InterPro"/>
</dbReference>
<dbReference type="CDD" id="cd01913">
    <property type="entry name" value="protease_HslV"/>
    <property type="match status" value="1"/>
</dbReference>
<dbReference type="FunFam" id="3.60.20.10:FF:000002">
    <property type="entry name" value="ATP-dependent protease subunit HslV"/>
    <property type="match status" value="1"/>
</dbReference>
<dbReference type="Gene3D" id="3.60.20.10">
    <property type="entry name" value="Glutamine Phosphoribosylpyrophosphate, subunit 1, domain 1"/>
    <property type="match status" value="1"/>
</dbReference>
<dbReference type="HAMAP" id="MF_00248">
    <property type="entry name" value="HslV"/>
    <property type="match status" value="1"/>
</dbReference>
<dbReference type="InterPro" id="IPR022281">
    <property type="entry name" value="ATP-dep_Prtase_HsIV_su"/>
</dbReference>
<dbReference type="InterPro" id="IPR029055">
    <property type="entry name" value="Ntn_hydrolases_N"/>
</dbReference>
<dbReference type="InterPro" id="IPR001353">
    <property type="entry name" value="Proteasome_sua/b"/>
</dbReference>
<dbReference type="InterPro" id="IPR023333">
    <property type="entry name" value="Proteasome_suB-type"/>
</dbReference>
<dbReference type="NCBIfam" id="TIGR03692">
    <property type="entry name" value="ATP_dep_HslV"/>
    <property type="match status" value="1"/>
</dbReference>
<dbReference type="NCBIfam" id="NF003964">
    <property type="entry name" value="PRK05456.1"/>
    <property type="match status" value="1"/>
</dbReference>
<dbReference type="PANTHER" id="PTHR32194:SF0">
    <property type="entry name" value="ATP-DEPENDENT PROTEASE SUBUNIT HSLV"/>
    <property type="match status" value="1"/>
</dbReference>
<dbReference type="PANTHER" id="PTHR32194">
    <property type="entry name" value="METALLOPROTEASE TLDD"/>
    <property type="match status" value="1"/>
</dbReference>
<dbReference type="Pfam" id="PF00227">
    <property type="entry name" value="Proteasome"/>
    <property type="match status" value="1"/>
</dbReference>
<dbReference type="PIRSF" id="PIRSF039093">
    <property type="entry name" value="HslV"/>
    <property type="match status" value="1"/>
</dbReference>
<dbReference type="SUPFAM" id="SSF56235">
    <property type="entry name" value="N-terminal nucleophile aminohydrolases (Ntn hydrolases)"/>
    <property type="match status" value="1"/>
</dbReference>
<dbReference type="PROSITE" id="PS51476">
    <property type="entry name" value="PROTEASOME_BETA_2"/>
    <property type="match status" value="1"/>
</dbReference>
<proteinExistence type="inferred from homology"/>
<sequence>MQQFDGTTIVSVRRGERVALGGDGQVTLGNIVIKATARKIRKLHGGKVLAGFAGGTADAFTLIERFEAKLQKHQGNLLVSAVELAKDWRTDRMLRRLEAMLIVADKDHTLIITGNGDVLEPEQGIAAIGSGGAFAQSAARALFENTDLAPEVVVKKSLEIAGDICIYTNHNHLIETLGPDDEA</sequence>
<comment type="function">
    <text evidence="1">Protease subunit of a proteasome-like degradation complex believed to be a general protein degrading machinery.</text>
</comment>
<comment type="catalytic activity">
    <reaction evidence="1">
        <text>ATP-dependent cleavage of peptide bonds with broad specificity.</text>
        <dbReference type="EC" id="3.4.25.2"/>
    </reaction>
</comment>
<comment type="activity regulation">
    <text evidence="1">Allosterically activated by HslU binding.</text>
</comment>
<comment type="subunit">
    <text evidence="1">A double ring-shaped homohexamer of HslV is capped on each side by a ring-shaped HslU homohexamer. The assembly of the HslU/HslV complex is dependent on binding of ATP.</text>
</comment>
<comment type="subcellular location">
    <subcellularLocation>
        <location evidence="1">Cytoplasm</location>
    </subcellularLocation>
</comment>
<comment type="similarity">
    <text evidence="1">Belongs to the peptidase T1B family. HslV subfamily.</text>
</comment>
<accession>Q7P113</accession>
<gene>
    <name evidence="1" type="primary">hslV</name>
    <name type="ordered locus">CV_0401</name>
</gene>
<organism>
    <name type="scientific">Chromobacterium violaceum (strain ATCC 12472 / DSM 30191 / JCM 1249 / CCUG 213 / NBRC 12614 / NCIMB 9131 / NCTC 9757 / MK)</name>
    <dbReference type="NCBI Taxonomy" id="243365"/>
    <lineage>
        <taxon>Bacteria</taxon>
        <taxon>Pseudomonadati</taxon>
        <taxon>Pseudomonadota</taxon>
        <taxon>Betaproteobacteria</taxon>
        <taxon>Neisseriales</taxon>
        <taxon>Chromobacteriaceae</taxon>
        <taxon>Chromobacterium</taxon>
    </lineage>
</organism>
<feature type="chain" id="PRO_0000148102" description="ATP-dependent protease subunit HslV">
    <location>
        <begin position="1"/>
        <end position="183"/>
    </location>
</feature>
<feature type="active site" evidence="1">
    <location>
        <position position="7"/>
    </location>
</feature>
<feature type="binding site" evidence="1">
    <location>
        <position position="162"/>
    </location>
    <ligand>
        <name>Na(+)</name>
        <dbReference type="ChEBI" id="CHEBI:29101"/>
    </ligand>
</feature>
<feature type="binding site" evidence="1">
    <location>
        <position position="165"/>
    </location>
    <ligand>
        <name>Na(+)</name>
        <dbReference type="ChEBI" id="CHEBI:29101"/>
    </ligand>
</feature>
<feature type="binding site" evidence="1">
    <location>
        <position position="168"/>
    </location>
    <ligand>
        <name>Na(+)</name>
        <dbReference type="ChEBI" id="CHEBI:29101"/>
    </ligand>
</feature>